<reference key="1">
    <citation type="journal article" date="1991" name="Biotechnol. Lett.">
        <title>Cloning and nucleotide sequencing of the tyrosine phenol lyase gene from Escherichia intermedia.</title>
        <authorList>
            <person name="Kurusu Y."/>
            <person name="Fukushima M."/>
            <person name="Kohama K."/>
            <person name="Kobayashi M."/>
            <person name="Terasawa M."/>
            <person name="Kumagai H."/>
            <person name="Yukawa H."/>
        </authorList>
    </citation>
    <scope>NUCLEOTIDE SEQUENCE [GENOMIC DNA]</scope>
</reference>
<feature type="chain" id="PRO_0000195634" description="Tyrosine phenol-lyase">
    <location>
        <begin position="1"/>
        <end position="456"/>
    </location>
</feature>
<feature type="modified residue" description="N6-(pyridoxal phosphate)lysine" evidence="1">
    <location>
        <position position="257"/>
    </location>
</feature>
<organism>
    <name type="scientific">Citrobacter intermedius</name>
    <name type="common">Escherichia intermedia</name>
    <dbReference type="NCBI Taxonomy" id="66695"/>
    <lineage>
        <taxon>Bacteria</taxon>
        <taxon>Pseudomonadati</taxon>
        <taxon>Pseudomonadota</taxon>
        <taxon>Gammaproteobacteria</taxon>
        <taxon>Enterobacterales</taxon>
        <taxon>Enterobacteriaceae</taxon>
        <taxon>Citrobacter</taxon>
    </lineage>
</organism>
<dbReference type="EC" id="4.1.99.2"/>
<dbReference type="EMBL" id="D00918">
    <property type="protein sequence ID" value="BAA00763.1"/>
    <property type="molecule type" value="Genomic_DNA"/>
</dbReference>
<dbReference type="PIR" id="I52555">
    <property type="entry name" value="I52555"/>
</dbReference>
<dbReference type="SMR" id="P31012"/>
<dbReference type="DrugBank" id="DB03897">
    <property type="generic name" value="Phloretic acid"/>
</dbReference>
<dbReference type="GO" id="GO:0050371">
    <property type="term" value="F:tyrosine phenol-lyase activity"/>
    <property type="evidence" value="ECO:0007669"/>
    <property type="project" value="UniProtKB-UniRule"/>
</dbReference>
<dbReference type="GO" id="GO:0006570">
    <property type="term" value="P:tyrosine metabolic process"/>
    <property type="evidence" value="ECO:0007669"/>
    <property type="project" value="InterPro"/>
</dbReference>
<dbReference type="CDD" id="cd00617">
    <property type="entry name" value="Tnase_like"/>
    <property type="match status" value="1"/>
</dbReference>
<dbReference type="FunFam" id="3.40.640.10:FF:000092">
    <property type="entry name" value="Tyrosine phenol-lyase"/>
    <property type="match status" value="1"/>
</dbReference>
<dbReference type="Gene3D" id="3.90.1150.10">
    <property type="entry name" value="Aspartate Aminotransferase, domain 1"/>
    <property type="match status" value="1"/>
</dbReference>
<dbReference type="Gene3D" id="3.40.640.10">
    <property type="entry name" value="Type I PLP-dependent aspartate aminotransferase-like (Major domain)"/>
    <property type="match status" value="1"/>
</dbReference>
<dbReference type="HAMAP" id="MF_00543">
    <property type="entry name" value="Tyr_phenol_lyase"/>
    <property type="match status" value="1"/>
</dbReference>
<dbReference type="InterPro" id="IPR001597">
    <property type="entry name" value="ArAA_b-elim_lyase/Thr_aldolase"/>
</dbReference>
<dbReference type="InterPro" id="IPR011166">
    <property type="entry name" value="Beta-eliminating_lyase"/>
</dbReference>
<dbReference type="InterPro" id="IPR015424">
    <property type="entry name" value="PyrdxlP-dep_Trfase"/>
</dbReference>
<dbReference type="InterPro" id="IPR015421">
    <property type="entry name" value="PyrdxlP-dep_Trfase_major"/>
</dbReference>
<dbReference type="InterPro" id="IPR015422">
    <property type="entry name" value="PyrdxlP-dep_Trfase_small"/>
</dbReference>
<dbReference type="InterPro" id="IPR018176">
    <property type="entry name" value="Tryptophanase_CS"/>
</dbReference>
<dbReference type="InterPro" id="IPR013441">
    <property type="entry name" value="Tyr_phenol_ly"/>
</dbReference>
<dbReference type="NCBIfam" id="NF009709">
    <property type="entry name" value="PRK13238.1"/>
    <property type="match status" value="1"/>
</dbReference>
<dbReference type="NCBIfam" id="TIGR02618">
    <property type="entry name" value="tyr_phenol_ly"/>
    <property type="match status" value="1"/>
</dbReference>
<dbReference type="PANTHER" id="PTHR32325">
    <property type="entry name" value="BETA-ELIMINATING LYASE-LIKE PROTEIN-RELATED"/>
    <property type="match status" value="1"/>
</dbReference>
<dbReference type="PANTHER" id="PTHR32325:SF4">
    <property type="entry name" value="TRYPTOPHANASE"/>
    <property type="match status" value="1"/>
</dbReference>
<dbReference type="Pfam" id="PF01212">
    <property type="entry name" value="Beta_elim_lyase"/>
    <property type="match status" value="1"/>
</dbReference>
<dbReference type="PIRSF" id="PIRSF001386">
    <property type="entry name" value="Trpase"/>
    <property type="match status" value="1"/>
</dbReference>
<dbReference type="SUPFAM" id="SSF53383">
    <property type="entry name" value="PLP-dependent transferases"/>
    <property type="match status" value="1"/>
</dbReference>
<dbReference type="PROSITE" id="PS00853">
    <property type="entry name" value="BETA_ELIM_LYASE"/>
    <property type="match status" value="1"/>
</dbReference>
<proteinExistence type="inferred from homology"/>
<accession>P31012</accession>
<gene>
    <name type="primary">tpl</name>
</gene>
<name>TPL_CITIN</name>
<comment type="catalytic activity">
    <reaction>
        <text>L-tyrosine + H2O = phenol + pyruvate + NH4(+)</text>
        <dbReference type="Rhea" id="RHEA:21704"/>
        <dbReference type="ChEBI" id="CHEBI:15361"/>
        <dbReference type="ChEBI" id="CHEBI:15377"/>
        <dbReference type="ChEBI" id="CHEBI:15882"/>
        <dbReference type="ChEBI" id="CHEBI:28938"/>
        <dbReference type="ChEBI" id="CHEBI:58315"/>
        <dbReference type="EC" id="4.1.99.2"/>
    </reaction>
</comment>
<comment type="cofactor">
    <cofactor>
        <name>pyridoxal 5'-phosphate</name>
        <dbReference type="ChEBI" id="CHEBI:597326"/>
    </cofactor>
</comment>
<comment type="subunit">
    <text>Homotetramer.</text>
</comment>
<comment type="similarity">
    <text evidence="2">Belongs to the beta-eliminating lyase family.</text>
</comment>
<sequence>MNYPAEPFRIKSVETVSMIPRDERLKKMQEAGYNTFLLNSKDIYIDLLTDSGTNAMSDKQWAGMMMGDEAYAGSENFYHLERTVQELFGFKHIVPTHQGRGAENLLSQLAIKPGQYVAGNMYFTTTRYHQEKNGAVFVDIVRDEAHDAGLNIAFKGDIDLKKLQKLIDEKGAENIAYICLAVTVNLAGGQPVSMANMRAVRELTAAHGIKVFYDATRCVENAYFIKEQEQGFENKSIAEIVHEMFSYADGCTMSGKKDCLVNIGGFLCMNDDEMFSSAKELVVVYEGMPSYGGLAGRDMEAMAIGLREAMQYEYIEHRVKQVRYLGDKLKAAGVPIVEPVGGHAVFLDARRFCEHLTQDEFPAQSLAASIYVETGVRSMERGIISAGRNNVTGEHHRPKLETVRLTIPRRVYTYAHMDVVADGIIKLYQHKEDIRGLKFIYEPKQLRFFTARFDYI</sequence>
<keyword id="KW-0456">Lyase</keyword>
<keyword id="KW-0663">Pyridoxal phosphate</keyword>
<protein>
    <recommendedName>
        <fullName>Tyrosine phenol-lyase</fullName>
        <ecNumber>4.1.99.2</ecNumber>
    </recommendedName>
    <alternativeName>
        <fullName>Beta-tyrosinase</fullName>
    </alternativeName>
</protein>
<evidence type="ECO:0000250" key="1"/>
<evidence type="ECO:0000305" key="2"/>